<sequence length="683" mass="79020">MADKKNLLLLFDHPTEPVFMDKGGNGTVFDVPASYVTDRYNKMCKKVQRRVSGGFEKNVLVKEIPIPDLSCSMRLGRSEQFSLFLESHRQMACHLIDVFIKMPTVDELQSVAVYARDRVNPVLFNYALSVAMLHRSDTKDLGLPAFAQIFPDRFIDSQMLRTMREESFVVERSAARLPVHSSVKYTASDLDVEHRLWYFREDLGVNLHHWHWHLVYPNTAPDRSIVDKDRRGELFYYMHQQIIARYNAERLCNHMARVQPFNNLEEPIAEGYFPKMDSLVASRAFPPRFDNTRLSDVDRPINQLRVGIDDMKRWRERIYEAIHQGYVLDANHKKIVLDDVKGIDILGNIIESSQLTPNKTLYGDLHNKGHILIAFSHDPTNKHLEYAGVMGDASTAMRDPIFYKWHAFIDNLFQEHKRQLSPYTEEDLTFPDVRVQSIQVESQGQVNRLTTFWQESDVDMSRGLDFVPRGHVLARFTHLQHHPFSYTIEVENSSEATRYGYVRIFLAPKLDDGNATMLLEQQRRMMVELDKFVVTMPPGSHTITRDSTESSVTIPFKRTFRNMDNPGEPQNFLCGCGWPQHMLIPKGRAEGLSFELFVMVSNYEDDKVDQKPEDCECSIAASYCGLRDRLYPDRKSMGFPFDRQPRSGSELLEKFLTPNMCSIEVIISHEARTEKIPELPDHS</sequence>
<dbReference type="EC" id="1.14.18.1"/>
<dbReference type="EMBL" id="AY190941">
    <property type="protein sequence ID" value="AAO01013.1"/>
    <property type="molecule type" value="Genomic_DNA"/>
</dbReference>
<dbReference type="EMBL" id="CH954179">
    <property type="protein sequence ID" value="EDV56739.1"/>
    <property type="molecule type" value="Genomic_DNA"/>
</dbReference>
<dbReference type="SMR" id="Q8I1F6"/>
<dbReference type="GlyCosmos" id="Q8I1F6">
    <property type="glycosylation" value="4 sites, No reported glycans"/>
</dbReference>
<dbReference type="EnsemblMetazoa" id="FBtr0142876">
    <property type="protein sequence ID" value="FBpp0141368"/>
    <property type="gene ID" value="FBgn0064624"/>
</dbReference>
<dbReference type="EnsemblMetazoa" id="XM_001976303.3">
    <property type="protein sequence ID" value="XP_001976339.1"/>
    <property type="gene ID" value="LOC6547312"/>
</dbReference>
<dbReference type="GeneID" id="6547312"/>
<dbReference type="KEGG" id="der:6547312"/>
<dbReference type="eggNOG" id="ENOG502QQCG">
    <property type="taxonomic scope" value="Eukaryota"/>
</dbReference>
<dbReference type="HOGENOM" id="CLU_012213_0_1_1"/>
<dbReference type="OMA" id="CKKVQRR"/>
<dbReference type="OrthoDB" id="6371642at2759"/>
<dbReference type="PhylomeDB" id="Q8I1F6"/>
<dbReference type="Proteomes" id="UP000008711">
    <property type="component" value="Unassembled WGS sequence"/>
</dbReference>
<dbReference type="GO" id="GO:0005576">
    <property type="term" value="C:extracellular region"/>
    <property type="evidence" value="ECO:0007669"/>
    <property type="project" value="UniProtKB-SubCell"/>
</dbReference>
<dbReference type="GO" id="GO:0004097">
    <property type="term" value="F:catechol oxidase activity"/>
    <property type="evidence" value="ECO:0007669"/>
    <property type="project" value="EnsemblMetazoa"/>
</dbReference>
<dbReference type="GO" id="GO:0046872">
    <property type="term" value="F:metal ion binding"/>
    <property type="evidence" value="ECO:0007669"/>
    <property type="project" value="UniProtKB-KW"/>
</dbReference>
<dbReference type="GO" id="GO:0004503">
    <property type="term" value="F:tyrosinase activity"/>
    <property type="evidence" value="ECO:0007669"/>
    <property type="project" value="UniProtKB-EC"/>
</dbReference>
<dbReference type="GO" id="GO:0042438">
    <property type="term" value="P:melanin biosynthetic process"/>
    <property type="evidence" value="ECO:0007669"/>
    <property type="project" value="UniProtKB-KW"/>
</dbReference>
<dbReference type="GO" id="GO:0035011">
    <property type="term" value="P:melanotic encapsulation of foreign target"/>
    <property type="evidence" value="ECO:0007669"/>
    <property type="project" value="EnsemblMetazoa"/>
</dbReference>
<dbReference type="FunFam" id="1.10.1280.10:FF:000004">
    <property type="entry name" value="Hemocyanin subunit 2"/>
    <property type="match status" value="1"/>
</dbReference>
<dbReference type="FunFam" id="2.60.40.1520:FF:000001">
    <property type="entry name" value="Hemocyanin subunit 2"/>
    <property type="match status" value="1"/>
</dbReference>
<dbReference type="FunFam" id="1.20.1370.10:FF:000001">
    <property type="entry name" value="Phenoloxidase 2"/>
    <property type="match status" value="1"/>
</dbReference>
<dbReference type="Gene3D" id="1.10.1280.10">
    <property type="entry name" value="Di-copper center containing domain from catechol oxidase"/>
    <property type="match status" value="1"/>
</dbReference>
<dbReference type="Gene3D" id="2.60.40.1520">
    <property type="entry name" value="Hemocyanin, C-terminal domain"/>
    <property type="match status" value="1"/>
</dbReference>
<dbReference type="Gene3D" id="1.20.1370.10">
    <property type="entry name" value="Hemocyanin, N-terminal domain"/>
    <property type="match status" value="1"/>
</dbReference>
<dbReference type="InterPro" id="IPR008922">
    <property type="entry name" value="Di-copper_centre_dom_sf"/>
</dbReference>
<dbReference type="InterPro" id="IPR013788">
    <property type="entry name" value="Hemocyanin/hexamerin"/>
</dbReference>
<dbReference type="InterPro" id="IPR000896">
    <property type="entry name" value="Hemocyanin/hexamerin_mid_dom"/>
</dbReference>
<dbReference type="InterPro" id="IPR005203">
    <property type="entry name" value="Hemocyanin_C"/>
</dbReference>
<dbReference type="InterPro" id="IPR037020">
    <property type="entry name" value="Hemocyanin_C_sf"/>
</dbReference>
<dbReference type="InterPro" id="IPR005204">
    <property type="entry name" value="Hemocyanin_N"/>
</dbReference>
<dbReference type="InterPro" id="IPR036697">
    <property type="entry name" value="Hemocyanin_N_sf"/>
</dbReference>
<dbReference type="InterPro" id="IPR014756">
    <property type="entry name" value="Ig_E-set"/>
</dbReference>
<dbReference type="InterPro" id="IPR002227">
    <property type="entry name" value="Tyrosinase_Cu-bd"/>
</dbReference>
<dbReference type="PANTHER" id="PTHR11511">
    <property type="entry name" value="LARVAL STORAGE PROTEIN/PHENOLOXIDASE"/>
    <property type="match status" value="1"/>
</dbReference>
<dbReference type="PANTHER" id="PTHR11511:SF4">
    <property type="entry name" value="PHENOLOXIDASE 2-RELATED"/>
    <property type="match status" value="1"/>
</dbReference>
<dbReference type="Pfam" id="PF03723">
    <property type="entry name" value="Hemocyanin_C"/>
    <property type="match status" value="1"/>
</dbReference>
<dbReference type="Pfam" id="PF00372">
    <property type="entry name" value="Hemocyanin_M"/>
    <property type="match status" value="1"/>
</dbReference>
<dbReference type="Pfam" id="PF03722">
    <property type="entry name" value="Hemocyanin_N"/>
    <property type="match status" value="1"/>
</dbReference>
<dbReference type="PRINTS" id="PR00187">
    <property type="entry name" value="HAEMOCYANIN"/>
</dbReference>
<dbReference type="SUPFAM" id="SSF48056">
    <property type="entry name" value="Di-copper centre-containing domain"/>
    <property type="match status" value="1"/>
</dbReference>
<dbReference type="SUPFAM" id="SSF81296">
    <property type="entry name" value="E set domains"/>
    <property type="match status" value="1"/>
</dbReference>
<dbReference type="SUPFAM" id="SSF48050">
    <property type="entry name" value="Hemocyanin, N-terminal domain"/>
    <property type="match status" value="1"/>
</dbReference>
<dbReference type="PROSITE" id="PS00209">
    <property type="entry name" value="HEMOCYANIN_1"/>
    <property type="match status" value="1"/>
</dbReference>
<dbReference type="PROSITE" id="PS00210">
    <property type="entry name" value="HEMOCYANIN_2"/>
    <property type="match status" value="1"/>
</dbReference>
<dbReference type="PROSITE" id="PS00498">
    <property type="entry name" value="TYROSINASE_2"/>
    <property type="match status" value="1"/>
</dbReference>
<comment type="function">
    <text evidence="1">This is a copper-containing oxidase that functions in the formation of pigments such as melanins and other polyphenolic compounds. Catalyzes the rate-limiting conversions of tyrosine to DOPA, DOPA to DOPA-quinone and possibly 5,6 dihydroxyindole to indole-5'6 quinone (By similarity).</text>
</comment>
<comment type="catalytic activity">
    <reaction>
        <text>2 L-dopa + O2 = 2 L-dopaquinone + 2 H2O</text>
        <dbReference type="Rhea" id="RHEA:34287"/>
        <dbReference type="ChEBI" id="CHEBI:15377"/>
        <dbReference type="ChEBI" id="CHEBI:15379"/>
        <dbReference type="ChEBI" id="CHEBI:57504"/>
        <dbReference type="ChEBI" id="CHEBI:57924"/>
        <dbReference type="EC" id="1.14.18.1"/>
    </reaction>
</comment>
<comment type="catalytic activity">
    <reaction>
        <text>L-tyrosine + O2 = L-dopaquinone + H2O</text>
        <dbReference type="Rhea" id="RHEA:18117"/>
        <dbReference type="ChEBI" id="CHEBI:15377"/>
        <dbReference type="ChEBI" id="CHEBI:15379"/>
        <dbReference type="ChEBI" id="CHEBI:57924"/>
        <dbReference type="ChEBI" id="CHEBI:58315"/>
        <dbReference type="EC" id="1.14.18.1"/>
    </reaction>
</comment>
<comment type="cofactor">
    <cofactor evidence="2">
        <name>Cu(2+)</name>
        <dbReference type="ChEBI" id="CHEBI:29036"/>
    </cofactor>
    <text evidence="2">Binds 2 copper ions per subunit.</text>
</comment>
<comment type="subcellular location">
    <subcellularLocation>
        <location evidence="2">Secreted</location>
    </subcellularLocation>
</comment>
<comment type="PTM">
    <text evidence="1">Upon activation, a trypsin type protease cleaves prophenol oxidase to yield the active enzyme.</text>
</comment>
<comment type="similarity">
    <text evidence="5">Belongs to the tyrosinase family.</text>
</comment>
<gene>
    <name type="primary">PPO3</name>
    <name type="synonym">Dox-A3</name>
    <name type="synonym">proPO59</name>
    <name type="ORF">GG22822</name>
</gene>
<name>PPO3_DROER</name>
<reference evidence="7" key="1">
    <citation type="journal article" date="2002" name="Genome Biol.">
        <title>Assessing the impact of comparative genomic sequence data on the functional annotation of the Drosophila genome.</title>
        <authorList>
            <person name="Bergman C.M."/>
            <person name="Pfeiffer B.D."/>
            <person name="Rincon-Limas D.E."/>
            <person name="Hoskins R.A."/>
            <person name="Gnirke A."/>
            <person name="Mungall C.J."/>
            <person name="Wang A.M."/>
            <person name="Kronmiller B."/>
            <person name="Pacleb J.M."/>
            <person name="Park S."/>
            <person name="Stapleton M."/>
            <person name="Wan K.H."/>
            <person name="George R.A."/>
            <person name="de Jong P.J."/>
            <person name="Botas J."/>
            <person name="Rubin G.M."/>
            <person name="Celniker S.E."/>
        </authorList>
    </citation>
    <scope>NUCLEOTIDE SEQUENCE [GENOMIC DNA]</scope>
</reference>
<reference key="2">
    <citation type="journal article" date="2007" name="Nature">
        <title>Evolution of genes and genomes on the Drosophila phylogeny.</title>
        <authorList>
            <consortium name="Drosophila 12 genomes consortium"/>
        </authorList>
    </citation>
    <scope>NUCLEOTIDE SEQUENCE [LARGE SCALE GENOMIC DNA]</scope>
    <source>
        <strain>Tucson 14021-0224.01</strain>
    </source>
</reference>
<feature type="propeptide" id="PRO_0000035903" evidence="1">
    <location>
        <begin position="1"/>
        <end position="48"/>
    </location>
</feature>
<feature type="chain" id="PRO_0000035904" description="Phenoloxidase 3">
    <location>
        <begin position="51"/>
        <end position="683"/>
    </location>
</feature>
<feature type="active site" description="Proton acceptor" evidence="3">
    <location>
        <position position="351"/>
    </location>
</feature>
<feature type="binding site" evidence="2">
    <location>
        <position position="209"/>
    </location>
    <ligand>
        <name>Cu cation</name>
        <dbReference type="ChEBI" id="CHEBI:23378"/>
        <label>A</label>
    </ligand>
</feature>
<feature type="binding site" evidence="2">
    <location>
        <position position="213"/>
    </location>
    <ligand>
        <name>Cu cation</name>
        <dbReference type="ChEBI" id="CHEBI:23378"/>
        <label>A</label>
    </ligand>
</feature>
<feature type="binding site" evidence="2">
    <location>
        <position position="239"/>
    </location>
    <ligand>
        <name>Cu cation</name>
        <dbReference type="ChEBI" id="CHEBI:23378"/>
        <label>A</label>
    </ligand>
</feature>
<feature type="binding site" evidence="2">
    <location>
        <position position="366"/>
    </location>
    <ligand>
        <name>Cu cation</name>
        <dbReference type="ChEBI" id="CHEBI:23378"/>
        <label>B</label>
    </ligand>
</feature>
<feature type="binding site" evidence="2">
    <location>
        <position position="370"/>
    </location>
    <ligand>
        <name>Cu cation</name>
        <dbReference type="ChEBI" id="CHEBI:23378"/>
        <label>B</label>
    </ligand>
</feature>
<feature type="binding site" evidence="2">
    <location>
        <position position="406"/>
    </location>
    <ligand>
        <name>Cu cation</name>
        <dbReference type="ChEBI" id="CHEBI:23378"/>
        <label>B</label>
    </ligand>
</feature>
<feature type="glycosylation site" description="N-linked (GlcNAc...) asparagine" evidence="5">
    <location>
        <position position="25"/>
    </location>
</feature>
<feature type="glycosylation site" description="N-linked (GlcNAc...) asparagine" evidence="5">
    <location>
        <position position="358"/>
    </location>
</feature>
<feature type="glycosylation site" description="N-linked (GlcNAc...) asparagine" evidence="5">
    <location>
        <position position="492"/>
    </location>
</feature>
<feature type="glycosylation site" description="N-linked (GlcNAc...) asparagine" evidence="5">
    <location>
        <position position="514"/>
    </location>
</feature>
<feature type="disulfide bond" evidence="4">
    <location>
        <begin position="574"/>
        <end position="617"/>
    </location>
</feature>
<feature type="disulfide bond" evidence="4">
    <location>
        <begin position="576"/>
        <end position="624"/>
    </location>
</feature>
<feature type="sequence conflict" description="In Ref. 1; AAO01013." evidence="6" ref="1">
    <original>L</original>
    <variation>M</variation>
    <location>
        <position position="328"/>
    </location>
</feature>
<feature type="sequence conflict" description="In Ref. 1; AAO01013." evidence="6" ref="1">
    <original>K</original>
    <variation>E</variation>
    <location>
        <position position="557"/>
    </location>
</feature>
<feature type="sequence conflict" description="In Ref. 1; AAO01013." evidence="6" ref="1">
    <original>EP</original>
    <variation>QL</variation>
    <location>
        <begin position="568"/>
        <end position="569"/>
    </location>
</feature>
<proteinExistence type="inferred from homology"/>
<keyword id="KW-0165">Cleavage on pair of basic residues</keyword>
<keyword id="KW-0186">Copper</keyword>
<keyword id="KW-1015">Disulfide bond</keyword>
<keyword id="KW-0325">Glycoprotein</keyword>
<keyword id="KW-0470">Melanin biosynthesis</keyword>
<keyword id="KW-0479">Metal-binding</keyword>
<keyword id="KW-0503">Monooxygenase</keyword>
<keyword id="KW-0560">Oxidoreductase</keyword>
<keyword id="KW-0964">Secreted</keyword>
<keyword id="KW-0865">Zymogen</keyword>
<organism>
    <name type="scientific">Drosophila erecta</name>
    <name type="common">Fruit fly</name>
    <dbReference type="NCBI Taxonomy" id="7220"/>
    <lineage>
        <taxon>Eukaryota</taxon>
        <taxon>Metazoa</taxon>
        <taxon>Ecdysozoa</taxon>
        <taxon>Arthropoda</taxon>
        <taxon>Hexapoda</taxon>
        <taxon>Insecta</taxon>
        <taxon>Pterygota</taxon>
        <taxon>Neoptera</taxon>
        <taxon>Endopterygota</taxon>
        <taxon>Diptera</taxon>
        <taxon>Brachycera</taxon>
        <taxon>Muscomorpha</taxon>
        <taxon>Ephydroidea</taxon>
        <taxon>Drosophilidae</taxon>
        <taxon>Drosophila</taxon>
        <taxon>Sophophora</taxon>
    </lineage>
</organism>
<protein>
    <recommendedName>
        <fullName>Phenoloxidase 3</fullName>
        <ecNumber>1.14.18.1</ecNumber>
    </recommendedName>
    <alternativeName>
        <fullName>Diphenoloxidase subunit A3</fullName>
    </alternativeName>
    <alternativeName>
        <fullName>Tyrosinase A3</fullName>
    </alternativeName>
</protein>
<evidence type="ECO:0000250" key="1"/>
<evidence type="ECO:0000250" key="2">
    <source>
        <dbReference type="UniProtKB" id="Q27451"/>
    </source>
</evidence>
<evidence type="ECO:0000250" key="3">
    <source>
        <dbReference type="UniProtKB" id="Q8MZM3"/>
    </source>
</evidence>
<evidence type="ECO:0000250" key="4">
    <source>
        <dbReference type="UniProtKB" id="Q9ZP19"/>
    </source>
</evidence>
<evidence type="ECO:0000255" key="5"/>
<evidence type="ECO:0000305" key="6"/>
<evidence type="ECO:0000312" key="7">
    <source>
        <dbReference type="EMBL" id="AAO01013.1"/>
    </source>
</evidence>
<accession>Q8I1F6</accession>
<accession>B3NP06</accession>